<keyword id="KW-0028">Amino-acid biosynthesis</keyword>
<keyword id="KW-0963">Cytoplasm</keyword>
<keyword id="KW-0220">Diaminopimelate biosynthesis</keyword>
<keyword id="KW-0457">Lysine biosynthesis</keyword>
<keyword id="KW-0520">NAD</keyword>
<keyword id="KW-0521">NADP</keyword>
<keyword id="KW-0560">Oxidoreductase</keyword>
<accession>A8GQX3</accession>
<protein>
    <recommendedName>
        <fullName evidence="1">4-hydroxy-tetrahydrodipicolinate reductase</fullName>
        <shortName evidence="1">HTPA reductase</shortName>
        <ecNumber evidence="1">1.17.1.8</ecNumber>
    </recommendedName>
</protein>
<name>DAPB_RICRS</name>
<dbReference type="EC" id="1.17.1.8" evidence="1"/>
<dbReference type="EMBL" id="CP000848">
    <property type="protein sequence ID" value="ABV75798.1"/>
    <property type="molecule type" value="Genomic_DNA"/>
</dbReference>
<dbReference type="RefSeq" id="WP_012150406.1">
    <property type="nucleotide sequence ID" value="NC_009882.1"/>
</dbReference>
<dbReference type="SMR" id="A8GQX3"/>
<dbReference type="GeneID" id="34514899"/>
<dbReference type="GeneID" id="928002"/>
<dbReference type="KEGG" id="rri:A1G_01080"/>
<dbReference type="HOGENOM" id="CLU_047479_2_2_5"/>
<dbReference type="UniPathway" id="UPA00034">
    <property type="reaction ID" value="UER00018"/>
</dbReference>
<dbReference type="Proteomes" id="UP000006832">
    <property type="component" value="Chromosome"/>
</dbReference>
<dbReference type="GO" id="GO:0005829">
    <property type="term" value="C:cytosol"/>
    <property type="evidence" value="ECO:0007669"/>
    <property type="project" value="TreeGrafter"/>
</dbReference>
<dbReference type="GO" id="GO:0008839">
    <property type="term" value="F:4-hydroxy-tetrahydrodipicolinate reductase"/>
    <property type="evidence" value="ECO:0007669"/>
    <property type="project" value="UniProtKB-EC"/>
</dbReference>
<dbReference type="GO" id="GO:0051287">
    <property type="term" value="F:NAD binding"/>
    <property type="evidence" value="ECO:0007669"/>
    <property type="project" value="UniProtKB-UniRule"/>
</dbReference>
<dbReference type="GO" id="GO:0050661">
    <property type="term" value="F:NADP binding"/>
    <property type="evidence" value="ECO:0007669"/>
    <property type="project" value="UniProtKB-UniRule"/>
</dbReference>
<dbReference type="GO" id="GO:0016726">
    <property type="term" value="F:oxidoreductase activity, acting on CH or CH2 groups, NAD or NADP as acceptor"/>
    <property type="evidence" value="ECO:0007669"/>
    <property type="project" value="UniProtKB-UniRule"/>
</dbReference>
<dbReference type="GO" id="GO:0019877">
    <property type="term" value="P:diaminopimelate biosynthetic process"/>
    <property type="evidence" value="ECO:0007669"/>
    <property type="project" value="UniProtKB-UniRule"/>
</dbReference>
<dbReference type="GO" id="GO:0009089">
    <property type="term" value="P:lysine biosynthetic process via diaminopimelate"/>
    <property type="evidence" value="ECO:0007669"/>
    <property type="project" value="UniProtKB-UniRule"/>
</dbReference>
<dbReference type="CDD" id="cd02274">
    <property type="entry name" value="DHDPR_N"/>
    <property type="match status" value="1"/>
</dbReference>
<dbReference type="Gene3D" id="3.30.360.10">
    <property type="entry name" value="Dihydrodipicolinate Reductase, domain 2"/>
    <property type="match status" value="1"/>
</dbReference>
<dbReference type="Gene3D" id="3.40.50.720">
    <property type="entry name" value="NAD(P)-binding Rossmann-like Domain"/>
    <property type="match status" value="1"/>
</dbReference>
<dbReference type="HAMAP" id="MF_00102">
    <property type="entry name" value="DapB"/>
    <property type="match status" value="1"/>
</dbReference>
<dbReference type="InterPro" id="IPR022663">
    <property type="entry name" value="DapB_C"/>
</dbReference>
<dbReference type="InterPro" id="IPR000846">
    <property type="entry name" value="DapB_N"/>
</dbReference>
<dbReference type="InterPro" id="IPR022664">
    <property type="entry name" value="DapB_N_CS"/>
</dbReference>
<dbReference type="InterPro" id="IPR023940">
    <property type="entry name" value="DHDPR_bac"/>
</dbReference>
<dbReference type="InterPro" id="IPR036291">
    <property type="entry name" value="NAD(P)-bd_dom_sf"/>
</dbReference>
<dbReference type="NCBIfam" id="TIGR00036">
    <property type="entry name" value="dapB"/>
    <property type="match status" value="1"/>
</dbReference>
<dbReference type="PANTHER" id="PTHR20836:SF0">
    <property type="entry name" value="4-HYDROXY-TETRAHYDRODIPICOLINATE REDUCTASE 1, CHLOROPLASTIC-RELATED"/>
    <property type="match status" value="1"/>
</dbReference>
<dbReference type="PANTHER" id="PTHR20836">
    <property type="entry name" value="DIHYDRODIPICOLINATE REDUCTASE"/>
    <property type="match status" value="1"/>
</dbReference>
<dbReference type="Pfam" id="PF05173">
    <property type="entry name" value="DapB_C"/>
    <property type="match status" value="1"/>
</dbReference>
<dbReference type="Pfam" id="PF01113">
    <property type="entry name" value="DapB_N"/>
    <property type="match status" value="1"/>
</dbReference>
<dbReference type="PIRSF" id="PIRSF000161">
    <property type="entry name" value="DHPR"/>
    <property type="match status" value="1"/>
</dbReference>
<dbReference type="SUPFAM" id="SSF55347">
    <property type="entry name" value="Glyceraldehyde-3-phosphate dehydrogenase-like, C-terminal domain"/>
    <property type="match status" value="1"/>
</dbReference>
<dbReference type="SUPFAM" id="SSF51735">
    <property type="entry name" value="NAD(P)-binding Rossmann-fold domains"/>
    <property type="match status" value="1"/>
</dbReference>
<dbReference type="PROSITE" id="PS01298">
    <property type="entry name" value="DAPB"/>
    <property type="match status" value="1"/>
</dbReference>
<evidence type="ECO:0000255" key="1">
    <source>
        <dbReference type="HAMAP-Rule" id="MF_00102"/>
    </source>
</evidence>
<evidence type="ECO:0000305" key="2"/>
<feature type="chain" id="PRO_1000008627" description="4-hydroxy-tetrahydrodipicolinate reductase">
    <location>
        <begin position="1"/>
        <end position="239"/>
    </location>
</feature>
<feature type="active site" description="Proton donor/acceptor" evidence="1">
    <location>
        <position position="134"/>
    </location>
</feature>
<feature type="active site" description="Proton donor" evidence="1">
    <location>
        <position position="138"/>
    </location>
</feature>
<feature type="binding site" evidence="1">
    <location>
        <begin position="8"/>
        <end position="13"/>
    </location>
    <ligand>
        <name>NAD(+)</name>
        <dbReference type="ChEBI" id="CHEBI:57540"/>
    </ligand>
</feature>
<feature type="binding site" evidence="1">
    <location>
        <begin position="78"/>
        <end position="80"/>
    </location>
    <ligand>
        <name>NAD(+)</name>
        <dbReference type="ChEBI" id="CHEBI:57540"/>
    </ligand>
</feature>
<feature type="binding site" evidence="1">
    <location>
        <begin position="102"/>
        <end position="105"/>
    </location>
    <ligand>
        <name>NAD(+)</name>
        <dbReference type="ChEBI" id="CHEBI:57540"/>
    </ligand>
</feature>
<feature type="binding site" evidence="1">
    <location>
        <position position="135"/>
    </location>
    <ligand>
        <name>(S)-2,3,4,5-tetrahydrodipicolinate</name>
        <dbReference type="ChEBI" id="CHEBI:16845"/>
    </ligand>
</feature>
<feature type="binding site" evidence="1">
    <location>
        <begin position="144"/>
        <end position="145"/>
    </location>
    <ligand>
        <name>(S)-2,3,4,5-tetrahydrodipicolinate</name>
        <dbReference type="ChEBI" id="CHEBI:16845"/>
    </ligand>
</feature>
<proteinExistence type="inferred from homology"/>
<reference key="1">
    <citation type="submission" date="2007-09" db="EMBL/GenBank/DDBJ databases">
        <title>Complete genome sequence of Rickettsia rickettsii.</title>
        <authorList>
            <person name="Madan A."/>
            <person name="Fahey J."/>
            <person name="Helton E."/>
            <person name="Ketteman M."/>
            <person name="Madan A."/>
            <person name="Rodrigues S."/>
            <person name="Sanchez A."/>
            <person name="Dasch G."/>
            <person name="Eremeeva M."/>
        </authorList>
    </citation>
    <scope>NUCLEOTIDE SEQUENCE [LARGE SCALE GENOMIC DNA]</scope>
    <source>
        <strain>Sheila Smith</strain>
    </source>
</reference>
<organism>
    <name type="scientific">Rickettsia rickettsii (strain Sheila Smith)</name>
    <dbReference type="NCBI Taxonomy" id="392021"/>
    <lineage>
        <taxon>Bacteria</taxon>
        <taxon>Pseudomonadati</taxon>
        <taxon>Pseudomonadota</taxon>
        <taxon>Alphaproteobacteria</taxon>
        <taxon>Rickettsiales</taxon>
        <taxon>Rickettsiaceae</taxon>
        <taxon>Rickettsieae</taxon>
        <taxon>Rickettsia</taxon>
        <taxon>spotted fever group</taxon>
    </lineage>
</organism>
<sequence>MLNIGLSGSTGKMGETILERIDKFKDCKIAAKFNSTNNLDDLDNFCKNSDVIIDFSTPEILEKLINYALKHNTKLVIGTTGLQPQHFKLLEKAAQTLPVLYSANMSIGANLLSYLAKEVTKILDDYDVEILETHHRNKKDSPSGTAVMLAETIASKKGLNITFNRGNRLRSEKEIGISSLRGGNVHGIHEISFLGDDEIITLKHEALNKNSFSIGAIKAAIWLQDKPSALYSMQDIYKI</sequence>
<comment type="function">
    <text evidence="1">Catalyzes the conversion of 4-hydroxy-tetrahydrodipicolinate (HTPA) to tetrahydrodipicolinate.</text>
</comment>
<comment type="catalytic activity">
    <reaction evidence="1">
        <text>(S)-2,3,4,5-tetrahydrodipicolinate + NAD(+) + H2O = (2S,4S)-4-hydroxy-2,3,4,5-tetrahydrodipicolinate + NADH + H(+)</text>
        <dbReference type="Rhea" id="RHEA:35323"/>
        <dbReference type="ChEBI" id="CHEBI:15377"/>
        <dbReference type="ChEBI" id="CHEBI:15378"/>
        <dbReference type="ChEBI" id="CHEBI:16845"/>
        <dbReference type="ChEBI" id="CHEBI:57540"/>
        <dbReference type="ChEBI" id="CHEBI:57945"/>
        <dbReference type="ChEBI" id="CHEBI:67139"/>
        <dbReference type="EC" id="1.17.1.8"/>
    </reaction>
</comment>
<comment type="catalytic activity">
    <reaction evidence="1">
        <text>(S)-2,3,4,5-tetrahydrodipicolinate + NADP(+) + H2O = (2S,4S)-4-hydroxy-2,3,4,5-tetrahydrodipicolinate + NADPH + H(+)</text>
        <dbReference type="Rhea" id="RHEA:35331"/>
        <dbReference type="ChEBI" id="CHEBI:15377"/>
        <dbReference type="ChEBI" id="CHEBI:15378"/>
        <dbReference type="ChEBI" id="CHEBI:16845"/>
        <dbReference type="ChEBI" id="CHEBI:57783"/>
        <dbReference type="ChEBI" id="CHEBI:58349"/>
        <dbReference type="ChEBI" id="CHEBI:67139"/>
        <dbReference type="EC" id="1.17.1.8"/>
    </reaction>
</comment>
<comment type="pathway">
    <text evidence="1">Amino-acid biosynthesis; L-lysine biosynthesis via DAP pathway; (S)-tetrahydrodipicolinate from L-aspartate: step 4/4.</text>
</comment>
<comment type="subcellular location">
    <subcellularLocation>
        <location evidence="1">Cytoplasm</location>
    </subcellularLocation>
</comment>
<comment type="similarity">
    <text evidence="1">Belongs to the DapB family.</text>
</comment>
<comment type="caution">
    <text evidence="2">Was originally thought to be a dihydrodipicolinate reductase (DHDPR), catalyzing the conversion of dihydrodipicolinate to tetrahydrodipicolinate. However, it was shown in E.coli that the substrate of the enzymatic reaction is not dihydrodipicolinate (DHDP) but in fact (2S,4S)-4-hydroxy-2,3,4,5-tetrahydrodipicolinic acid (HTPA), the product released by the DapA-catalyzed reaction.</text>
</comment>
<gene>
    <name evidence="1" type="primary">dapB</name>
    <name type="ordered locus">A1G_01080</name>
</gene>